<accession>Q5XI06</accession>
<protein>
    <recommendedName>
        <fullName>Histone acetyltransferase KAT8</fullName>
        <ecNumber evidence="2">2.3.1.48</ecNumber>
    </recommendedName>
    <alternativeName>
        <fullName>Lysine acetyltransferase 8</fullName>
    </alternativeName>
    <alternativeName>
        <fullName>MOZ, YBF2/SAS3, SAS2 and TIP60 protein 1</fullName>
        <shortName>MYST-1</shortName>
    </alternativeName>
    <alternativeName>
        <fullName evidence="6">Protein acetyltransferase KAT8</fullName>
        <ecNumber evidence="2">2.3.1.-</ecNumber>
    </alternativeName>
    <alternativeName>
        <fullName evidence="6">Protein propionyltransferase KAT8</fullName>
        <ecNumber evidence="2">2.3.1.-</ecNumber>
    </alternativeName>
</protein>
<keyword id="KW-0007">Acetylation</keyword>
<keyword id="KW-0010">Activator</keyword>
<keyword id="KW-0012">Acyltransferase</keyword>
<keyword id="KW-0156">Chromatin regulator</keyword>
<keyword id="KW-0158">Chromosome</keyword>
<keyword id="KW-0479">Metal-binding</keyword>
<keyword id="KW-0496">Mitochondrion</keyword>
<keyword id="KW-0539">Nucleus</keyword>
<keyword id="KW-0597">Phosphoprotein</keyword>
<keyword id="KW-1185">Reference proteome</keyword>
<keyword id="KW-0804">Transcription</keyword>
<keyword id="KW-0805">Transcription regulation</keyword>
<keyword id="KW-0808">Transferase</keyword>
<keyword id="KW-0862">Zinc</keyword>
<keyword id="KW-0863">Zinc-finger</keyword>
<sequence>MAAQGATAAVAATTSGIVGEGEPGPGENTSVEGPARSPGRVSPPTPARGEPEVTVEIGETYLCRRPDSTWHSAEVIQSRVNDQEGREEFYVHYVGFNRRLDEWVDKNRLALTKTVKDAVQKNSEKYLSELAEQPERKITRNQKRKHDEINHVQKTYAEMDPTTAALEKEHEAITKVKYVDKIHIGNYEIDAWYFSPFPEDYGKQPKLWLCEYCLKYMKFEKSYRFHLGQCQWRQPPGKEIYRKSNISVYEVDGKDHKIYCQNLCLLAKLFLDHKTLYFDVEPFVFYILTEVDRQGAHIVGYFSKEKESPDGNNVACILTLPPYQRRGYGKFLIAFSYELSKLESTVGSPEKPLSDLGKLSYRSYWSWVLLEILRDFRGTLSIKDLSQMTSITQNDIISTLQSLNMVKYWKGQHVICVTPKLVEEHLKSAQYKKPPITVDSVCLKWAPPKHKQVKLSKK</sequence>
<proteinExistence type="evidence at protein level"/>
<reference key="1">
    <citation type="journal article" date="2004" name="Genome Res.">
        <title>The status, quality, and expansion of the NIH full-length cDNA project: the Mammalian Gene Collection (MGC).</title>
        <authorList>
            <consortium name="The MGC Project Team"/>
        </authorList>
    </citation>
    <scope>NUCLEOTIDE SEQUENCE [LARGE SCALE MRNA]</scope>
    <source>
        <tissue>Testis</tissue>
    </source>
</reference>
<reference key="2">
    <citation type="journal article" date="2012" name="Nat. Commun.">
        <title>Quantitative maps of protein phosphorylation sites across 14 different rat organs and tissues.</title>
        <authorList>
            <person name="Lundby A."/>
            <person name="Secher A."/>
            <person name="Lage K."/>
            <person name="Nordsborg N.B."/>
            <person name="Dmytriyev A."/>
            <person name="Lundby C."/>
            <person name="Olsen J.V."/>
        </authorList>
    </citation>
    <scope>PHOSPHORYLATION [LARGE SCALE ANALYSIS] AT SER-37 AND SER-42</scope>
    <scope>IDENTIFICATION BY MASS SPECTROMETRY [LARGE SCALE ANALYSIS]</scope>
</reference>
<evidence type="ECO:0000250" key="1">
    <source>
        <dbReference type="UniProtKB" id="Q9D1P2"/>
    </source>
</evidence>
<evidence type="ECO:0000250" key="2">
    <source>
        <dbReference type="UniProtKB" id="Q9H7Z6"/>
    </source>
</evidence>
<evidence type="ECO:0000255" key="3"/>
<evidence type="ECO:0000255" key="4">
    <source>
        <dbReference type="PROSITE-ProRule" id="PRU01063"/>
    </source>
</evidence>
<evidence type="ECO:0000256" key="5">
    <source>
        <dbReference type="SAM" id="MobiDB-lite"/>
    </source>
</evidence>
<evidence type="ECO:0000305" key="6"/>
<evidence type="ECO:0007744" key="7">
    <source>
    </source>
</evidence>
<dbReference type="EC" id="2.3.1.48" evidence="2"/>
<dbReference type="EC" id="2.3.1.-" evidence="2"/>
<dbReference type="EMBL" id="BC083891">
    <property type="protein sequence ID" value="AAH83891.1"/>
    <property type="molecule type" value="mRNA"/>
</dbReference>
<dbReference type="RefSeq" id="NP_001017378.1">
    <property type="nucleotide sequence ID" value="NM_001017378.1"/>
</dbReference>
<dbReference type="BMRB" id="Q5XI06"/>
<dbReference type="SMR" id="Q5XI06"/>
<dbReference type="FunCoup" id="Q5XI06">
    <property type="interactions" value="2991"/>
</dbReference>
<dbReference type="STRING" id="10116.ENSRNOP00000026527"/>
<dbReference type="GlyGen" id="Q5XI06">
    <property type="glycosylation" value="1 site"/>
</dbReference>
<dbReference type="iPTMnet" id="Q5XI06"/>
<dbReference type="PhosphoSitePlus" id="Q5XI06"/>
<dbReference type="PaxDb" id="10116-ENSRNOP00000026527"/>
<dbReference type="GeneID" id="310194"/>
<dbReference type="KEGG" id="rno:310194"/>
<dbReference type="UCSC" id="RGD:1311512">
    <property type="organism name" value="rat"/>
</dbReference>
<dbReference type="AGR" id="RGD:1311512"/>
<dbReference type="CTD" id="84148"/>
<dbReference type="RGD" id="1311512">
    <property type="gene designation" value="Kat8"/>
</dbReference>
<dbReference type="VEuPathDB" id="HostDB:ENSRNOG00000019485"/>
<dbReference type="eggNOG" id="KOG2747">
    <property type="taxonomic scope" value="Eukaryota"/>
</dbReference>
<dbReference type="HOGENOM" id="CLU_011815_2_1_1"/>
<dbReference type="InParanoid" id="Q5XI06"/>
<dbReference type="OrthoDB" id="8373at9989"/>
<dbReference type="PhylomeDB" id="Q5XI06"/>
<dbReference type="TreeFam" id="TF317619"/>
<dbReference type="Reactome" id="R-RNO-3214847">
    <property type="pathway name" value="HATs acetylate histones"/>
</dbReference>
<dbReference type="Reactome" id="R-RNO-9772755">
    <property type="pathway name" value="Formation of WDR5-containing histone-modifying complexes"/>
</dbReference>
<dbReference type="PRO" id="PR:Q5XI06"/>
<dbReference type="Proteomes" id="UP000002494">
    <property type="component" value="Chromosome 1"/>
</dbReference>
<dbReference type="Bgee" id="ENSRNOG00000019585">
    <property type="expression patterns" value="Expressed in testis and 19 other cell types or tissues"/>
</dbReference>
<dbReference type="GO" id="GO:0005694">
    <property type="term" value="C:chromosome"/>
    <property type="evidence" value="ECO:0000250"/>
    <property type="project" value="UniProtKB"/>
</dbReference>
<dbReference type="GO" id="GO:0000123">
    <property type="term" value="C:histone acetyltransferase complex"/>
    <property type="evidence" value="ECO:0000250"/>
    <property type="project" value="UniProtKB"/>
</dbReference>
<dbReference type="GO" id="GO:0000776">
    <property type="term" value="C:kinetochore"/>
    <property type="evidence" value="ECO:0000266"/>
    <property type="project" value="RGD"/>
</dbReference>
<dbReference type="GO" id="GO:0005739">
    <property type="term" value="C:mitochondrion"/>
    <property type="evidence" value="ECO:0000250"/>
    <property type="project" value="UniProtKB"/>
</dbReference>
<dbReference type="GO" id="GO:0071339">
    <property type="term" value="C:MLL1 complex"/>
    <property type="evidence" value="ECO:0000250"/>
    <property type="project" value="UniProtKB"/>
</dbReference>
<dbReference type="GO" id="GO:0072487">
    <property type="term" value="C:MSL complex"/>
    <property type="evidence" value="ECO:0000250"/>
    <property type="project" value="UniProtKB"/>
</dbReference>
<dbReference type="GO" id="GO:0044545">
    <property type="term" value="C:NSL complex"/>
    <property type="evidence" value="ECO:0000250"/>
    <property type="project" value="UniProtKB"/>
</dbReference>
<dbReference type="GO" id="GO:0035267">
    <property type="term" value="C:NuA4 histone acetyltransferase complex"/>
    <property type="evidence" value="ECO:0000318"/>
    <property type="project" value="GO_Central"/>
</dbReference>
<dbReference type="GO" id="GO:0016363">
    <property type="term" value="C:nuclear matrix"/>
    <property type="evidence" value="ECO:0000266"/>
    <property type="project" value="RGD"/>
</dbReference>
<dbReference type="GO" id="GO:0005634">
    <property type="term" value="C:nucleus"/>
    <property type="evidence" value="ECO:0000250"/>
    <property type="project" value="UniProtKB"/>
</dbReference>
<dbReference type="GO" id="GO:0016407">
    <property type="term" value="F:acetyltransferase activity"/>
    <property type="evidence" value="ECO:0000266"/>
    <property type="project" value="RGD"/>
</dbReference>
<dbReference type="GO" id="GO:0019899">
    <property type="term" value="F:enzyme binding"/>
    <property type="evidence" value="ECO:0000266"/>
    <property type="project" value="RGD"/>
</dbReference>
<dbReference type="GO" id="GO:0010485">
    <property type="term" value="F:histone H4 acetyltransferase activity"/>
    <property type="evidence" value="ECO:0000266"/>
    <property type="project" value="RGD"/>
</dbReference>
<dbReference type="GO" id="GO:0046972">
    <property type="term" value="F:histone H4K16 acetyltransferase activity"/>
    <property type="evidence" value="ECO:0000266"/>
    <property type="project" value="RGD"/>
</dbReference>
<dbReference type="GO" id="GO:0043995">
    <property type="term" value="F:histone H4K5 acetyltransferase activity"/>
    <property type="evidence" value="ECO:0000250"/>
    <property type="project" value="UniProtKB"/>
</dbReference>
<dbReference type="GO" id="GO:0043996">
    <property type="term" value="F:histone H4K8 acetyltransferase activity"/>
    <property type="evidence" value="ECO:0000250"/>
    <property type="project" value="UniProtKB"/>
</dbReference>
<dbReference type="GO" id="GO:1990841">
    <property type="term" value="F:promoter-specific chromatin binding"/>
    <property type="evidence" value="ECO:0000266"/>
    <property type="project" value="RGD"/>
</dbReference>
<dbReference type="GO" id="GO:0061920">
    <property type="term" value="F:protein propionyltransferase activity"/>
    <property type="evidence" value="ECO:0000250"/>
    <property type="project" value="UniProtKB"/>
</dbReference>
<dbReference type="GO" id="GO:0061733">
    <property type="term" value="F:protein-lysine-acetyltransferase activity"/>
    <property type="evidence" value="ECO:0000250"/>
    <property type="project" value="UniProtKB"/>
</dbReference>
<dbReference type="GO" id="GO:0061629">
    <property type="term" value="F:RNA polymerase II-specific DNA-binding transcription factor binding"/>
    <property type="evidence" value="ECO:0000266"/>
    <property type="project" value="RGD"/>
</dbReference>
<dbReference type="GO" id="GO:0003713">
    <property type="term" value="F:transcription coactivator activity"/>
    <property type="evidence" value="ECO:0000266"/>
    <property type="project" value="RGD"/>
</dbReference>
<dbReference type="GO" id="GO:0008270">
    <property type="term" value="F:zinc ion binding"/>
    <property type="evidence" value="ECO:0007669"/>
    <property type="project" value="UniProtKB-KW"/>
</dbReference>
<dbReference type="GO" id="GO:0009048">
    <property type="term" value="P:dosage compensation by inactivation of X chromosome"/>
    <property type="evidence" value="ECO:0000266"/>
    <property type="project" value="RGD"/>
</dbReference>
<dbReference type="GO" id="GO:0030099">
    <property type="term" value="P:myeloid cell differentiation"/>
    <property type="evidence" value="ECO:0000266"/>
    <property type="project" value="RGD"/>
</dbReference>
<dbReference type="GO" id="GO:0045892">
    <property type="term" value="P:negative regulation of DNA-templated transcription"/>
    <property type="evidence" value="ECO:0000266"/>
    <property type="project" value="RGD"/>
</dbReference>
<dbReference type="GO" id="GO:0010719">
    <property type="term" value="P:negative regulation of epithelial to mesenchymal transition"/>
    <property type="evidence" value="ECO:0000250"/>
    <property type="project" value="UniProtKB"/>
</dbReference>
<dbReference type="GO" id="GO:0032480">
    <property type="term" value="P:negative regulation of type I interferon production"/>
    <property type="evidence" value="ECO:0000266"/>
    <property type="project" value="RGD"/>
</dbReference>
<dbReference type="GO" id="GO:0022008">
    <property type="term" value="P:neurogenesis"/>
    <property type="evidence" value="ECO:0000266"/>
    <property type="project" value="RGD"/>
</dbReference>
<dbReference type="GO" id="GO:0048477">
    <property type="term" value="P:oogenesis"/>
    <property type="evidence" value="ECO:0000250"/>
    <property type="project" value="UniProtKB"/>
</dbReference>
<dbReference type="GO" id="GO:0045893">
    <property type="term" value="P:positive regulation of DNA-templated transcription"/>
    <property type="evidence" value="ECO:0000250"/>
    <property type="project" value="UniProtKB"/>
</dbReference>
<dbReference type="GO" id="GO:1902726">
    <property type="term" value="P:positive regulation of skeletal muscle satellite cell differentiation"/>
    <property type="evidence" value="ECO:0000250"/>
    <property type="project" value="UniProtKB"/>
</dbReference>
<dbReference type="GO" id="GO:0060261">
    <property type="term" value="P:positive regulation of transcription initiation by RNA polymerase II"/>
    <property type="evidence" value="ECO:0000250"/>
    <property type="project" value="UniProtKB"/>
</dbReference>
<dbReference type="GO" id="GO:0035166">
    <property type="term" value="P:post-embryonic hemopoiesis"/>
    <property type="evidence" value="ECO:0000250"/>
    <property type="project" value="UniProtKB"/>
</dbReference>
<dbReference type="GO" id="GO:0010506">
    <property type="term" value="P:regulation of autophagy"/>
    <property type="evidence" value="ECO:0000266"/>
    <property type="project" value="RGD"/>
</dbReference>
<dbReference type="GO" id="GO:1903108">
    <property type="term" value="P:regulation of mitochondrial transcription"/>
    <property type="evidence" value="ECO:0000250"/>
    <property type="project" value="UniProtKB"/>
</dbReference>
<dbReference type="GO" id="GO:0050684">
    <property type="term" value="P:regulation of mRNA processing"/>
    <property type="evidence" value="ECO:0000266"/>
    <property type="project" value="RGD"/>
</dbReference>
<dbReference type="GO" id="GO:0045815">
    <property type="term" value="P:transcription initiation-coupled chromatin remodeling"/>
    <property type="evidence" value="ECO:0000266"/>
    <property type="project" value="RGD"/>
</dbReference>
<dbReference type="CDD" id="cd18984">
    <property type="entry name" value="CBD_MOF_like"/>
    <property type="match status" value="1"/>
</dbReference>
<dbReference type="CDD" id="cd04301">
    <property type="entry name" value="NAT_SF"/>
    <property type="match status" value="1"/>
</dbReference>
<dbReference type="FunFam" id="1.10.10.10:FF:000022">
    <property type="entry name" value="Histone acetyltransferase"/>
    <property type="match status" value="1"/>
</dbReference>
<dbReference type="FunFam" id="2.30.30.140:FF:000039">
    <property type="entry name" value="Histone acetyltransferase"/>
    <property type="match status" value="1"/>
</dbReference>
<dbReference type="FunFam" id="3.30.60.60:FF:000001">
    <property type="entry name" value="Histone acetyltransferase"/>
    <property type="match status" value="1"/>
</dbReference>
<dbReference type="FunFam" id="3.40.630.30:FF:000002">
    <property type="entry name" value="Histone acetyltransferase"/>
    <property type="match status" value="1"/>
</dbReference>
<dbReference type="Gene3D" id="2.30.30.140">
    <property type="match status" value="1"/>
</dbReference>
<dbReference type="Gene3D" id="3.40.630.30">
    <property type="match status" value="1"/>
</dbReference>
<dbReference type="Gene3D" id="3.30.60.60">
    <property type="entry name" value="N-acetyl transferase-like"/>
    <property type="match status" value="1"/>
</dbReference>
<dbReference type="Gene3D" id="1.10.10.10">
    <property type="entry name" value="Winged helix-like DNA-binding domain superfamily/Winged helix DNA-binding domain"/>
    <property type="match status" value="1"/>
</dbReference>
<dbReference type="InterPro" id="IPR016181">
    <property type="entry name" value="Acyl_CoA_acyltransferase"/>
</dbReference>
<dbReference type="InterPro" id="IPR016197">
    <property type="entry name" value="Chromo-like_dom_sf"/>
</dbReference>
<dbReference type="InterPro" id="IPR000953">
    <property type="entry name" value="Chromo/chromo_shadow_dom"/>
</dbReference>
<dbReference type="InterPro" id="IPR002717">
    <property type="entry name" value="HAT_MYST-type"/>
</dbReference>
<dbReference type="InterPro" id="IPR050603">
    <property type="entry name" value="MYST_HAT"/>
</dbReference>
<dbReference type="InterPro" id="IPR025995">
    <property type="entry name" value="Tudor-knot"/>
</dbReference>
<dbReference type="InterPro" id="IPR036388">
    <property type="entry name" value="WH-like_DNA-bd_sf"/>
</dbReference>
<dbReference type="InterPro" id="IPR040706">
    <property type="entry name" value="Zf-MYST"/>
</dbReference>
<dbReference type="PANTHER" id="PTHR10615">
    <property type="entry name" value="HISTONE ACETYLTRANSFERASE"/>
    <property type="match status" value="1"/>
</dbReference>
<dbReference type="PANTHER" id="PTHR10615:SF82">
    <property type="entry name" value="HISTONE ACETYLTRANSFERASE KAT8"/>
    <property type="match status" value="1"/>
</dbReference>
<dbReference type="Pfam" id="PF01853">
    <property type="entry name" value="MOZ_SAS"/>
    <property type="match status" value="1"/>
</dbReference>
<dbReference type="Pfam" id="PF11717">
    <property type="entry name" value="Tudor-knot"/>
    <property type="match status" value="1"/>
</dbReference>
<dbReference type="Pfam" id="PF17772">
    <property type="entry name" value="zf-MYST"/>
    <property type="match status" value="1"/>
</dbReference>
<dbReference type="SMART" id="SM00298">
    <property type="entry name" value="CHROMO"/>
    <property type="match status" value="1"/>
</dbReference>
<dbReference type="SUPFAM" id="SSF55729">
    <property type="entry name" value="Acyl-CoA N-acyltransferases (Nat)"/>
    <property type="match status" value="1"/>
</dbReference>
<dbReference type="SUPFAM" id="SSF54160">
    <property type="entry name" value="Chromo domain-like"/>
    <property type="match status" value="1"/>
</dbReference>
<dbReference type="PROSITE" id="PS51726">
    <property type="entry name" value="MYST_HAT"/>
    <property type="match status" value="1"/>
</dbReference>
<comment type="function">
    <text evidence="1 2">Histone acetyltransferase that catalyzes histone H4 acetylation at 'Lys-5'- and 'Lys-8' (H4K5ac and H4K8ac) or 'Lys-16' (H4K16ac), depending on the context. Catalytic component of the MSL histone acetyltransferase complex, a multiprotein complex that mediates the majority of histone H4 acetylation at 'Lys-16' (H4K16ac), an epigenetic mark that prevents chromatin compaction (By similarity). H4K16ac constitutes the only acetylation mark intergenerationally transmitted and regulates key biological processes, such as oogenesis, embryonic stem cell pluripotency, hematopoiesis or glucose metabolism (By similarity). The MSL complex is required for chromosome stability and genome integrity by maintaining homeostatic levels of H4K16ac (By similarity). The MSL complex is also involved in gene dosage by promoting up-regulation of genes expressed by the X chromosome. X up-regulation is required to compensate for autosomal biallelic expression. The MSL complex also participates in gene dosage compensation by promoting expression of Tsix non-coding RNA (By similarity). As part of the NSL histone acetyltransferase complex, catalyzes histone H4 acetylation at 'Lys-5'- and 'Lys-8' (H4K5ac and H4K8ac) at transcription start sites and promotes transcription initiation. The NSL complex also acts as a regulator of gene expression in mitochondria: KAT8 associates with mitochondrial DNA and controls expression of respiratory genes in an acetyltransferase-dependent mechanism. Also functions as an acetyltransferase for non-histone targets, such as ALKBH5, COX17, IRF3, KDM1A/LSD1, LMNA, PAX7 or TP53/p53 (By similarity). Acts as an inhibitor of antiviral immunity by acetylating IRF3, preventing IRF3 recruitment to promoters. Acts as a regulator of asymmetric division in muscle stem cells by mediating acetylation of PAX7 (By similarity). As part of the NSL complex, acetylates TP53/p53 at 'Lys-120'. Acts as a regulator of epithelial-to-mesenchymal transition as part of the NSL complex by mediating acetylation of KDM1A/LSD1 (By similarity). The NSL complex is required for nuclear architecture maintenance by mediating acetylation of LMNA. Promotes mitochondrial integrity by catalyzing acetylation of COX17 (By similarity). In addition to protein acetyltransferase activity, able to mediate protein propionylation (By similarity).</text>
</comment>
<comment type="catalytic activity">
    <reaction evidence="2">
        <text>L-lysyl-[histone] + acetyl-CoA = N(6)-acetyl-L-lysyl-[histone] + CoA + H(+)</text>
        <dbReference type="Rhea" id="RHEA:21992"/>
        <dbReference type="Rhea" id="RHEA-COMP:9845"/>
        <dbReference type="Rhea" id="RHEA-COMP:11338"/>
        <dbReference type="ChEBI" id="CHEBI:15378"/>
        <dbReference type="ChEBI" id="CHEBI:29969"/>
        <dbReference type="ChEBI" id="CHEBI:57287"/>
        <dbReference type="ChEBI" id="CHEBI:57288"/>
        <dbReference type="ChEBI" id="CHEBI:61930"/>
        <dbReference type="EC" id="2.3.1.48"/>
    </reaction>
    <physiologicalReaction direction="left-to-right" evidence="2">
        <dbReference type="Rhea" id="RHEA:21993"/>
    </physiologicalReaction>
</comment>
<comment type="catalytic activity">
    <reaction evidence="2">
        <text>L-lysyl-[protein] + acetyl-CoA = N(6)-acetyl-L-lysyl-[protein] + CoA + H(+)</text>
        <dbReference type="Rhea" id="RHEA:45948"/>
        <dbReference type="Rhea" id="RHEA-COMP:9752"/>
        <dbReference type="Rhea" id="RHEA-COMP:10731"/>
        <dbReference type="ChEBI" id="CHEBI:15378"/>
        <dbReference type="ChEBI" id="CHEBI:29969"/>
        <dbReference type="ChEBI" id="CHEBI:57287"/>
        <dbReference type="ChEBI" id="CHEBI:57288"/>
        <dbReference type="ChEBI" id="CHEBI:61930"/>
    </reaction>
    <physiologicalReaction direction="left-to-right" evidence="2">
        <dbReference type="Rhea" id="RHEA:45949"/>
    </physiologicalReaction>
</comment>
<comment type="catalytic activity">
    <reaction evidence="2">
        <text>propanoyl-CoA + L-lysyl-[protein] = N(6)-propanoyl-L-lysyl-[protein] + CoA + H(+)</text>
        <dbReference type="Rhea" id="RHEA:54020"/>
        <dbReference type="Rhea" id="RHEA-COMP:9752"/>
        <dbReference type="Rhea" id="RHEA-COMP:13758"/>
        <dbReference type="ChEBI" id="CHEBI:15378"/>
        <dbReference type="ChEBI" id="CHEBI:29969"/>
        <dbReference type="ChEBI" id="CHEBI:57287"/>
        <dbReference type="ChEBI" id="CHEBI:57392"/>
        <dbReference type="ChEBI" id="CHEBI:138019"/>
    </reaction>
    <physiologicalReaction direction="left-to-right" evidence="2">
        <dbReference type="Rhea" id="RHEA:54021"/>
    </physiologicalReaction>
</comment>
<comment type="activity regulation">
    <text evidence="2">The acetyltransferase activity is inhibited by anacardic acid derivatives.</text>
</comment>
<comment type="subunit">
    <text evidence="1 2">Component of a multisubunit histone acetyltransferase complex (MSL) at least composed of the MOF/KAT8, MSL1/hampin, MSL2L1 and MSL3L1. Component of the NSL complex at least composed of MOF/KAT8, KANSL1, KANSL2, KANSL3, MCRS1, PHF20, OGT1/OGT, WDR5 and HCFC1. Component of some MLL1/MLL complex, at least composed of the core components KMT2A/MLL1, ASH2L, HCFC1, WDR5 and RBBP5, as well as the facultative components BACC1, CHD8, E2F6, HSP70, INO80C, KANSL1, LAS1L, MAX, MCRS1, MGA, MOF/KAT8, PELP1, PHF20, PRP31, RING2, RUVB1/TIP49A, RUVB2/TIP49B, SENP3, TAF1, TAF4, TAF6, TAF7, TAF9 and TEX10. Interacts with the chromodomain of MORF4L1/MRG15. Interacts with ATM (via its Tudor-knot domain); possibly regulating the activity of ATM (By similarity). Interacts with NELFD (By similarity).</text>
</comment>
<comment type="subcellular location">
    <subcellularLocation>
        <location evidence="2">Nucleus</location>
    </subcellularLocation>
    <subcellularLocation>
        <location evidence="2">Chromosome</location>
    </subcellularLocation>
    <subcellularLocation>
        <location evidence="2">Mitochondrion</location>
    </subcellularLocation>
    <text evidence="1 2">Translocated into the nucleus via its association with importin-alpha-1 (KPNA2). As part of the NSL complex, associates with the proximal part of promoters and transcription start sites (By similarity). As part of the MSL complex, associates with gene bodies (By similarity). Also localizes to mitochondria; associates with mitochondrial DNA and regulates mitochondrial gene expression (By similarity).</text>
</comment>
<comment type="PTM">
    <text evidence="2">Acetylation at Lys-274 facilitates cognate substrate Lys-binding and acetylation. Although considered as an autoacetylation event, acetylation at Lys-274 probably takes place via a non-enzymatic process following acetyl-CoA-binding, which primes KAT8 for cognate protein-lysine acetylation. Deacetylated by SIRT1.</text>
</comment>
<comment type="similarity">
    <text evidence="6">Belongs to the MYST (SAS/MOZ) family.</text>
</comment>
<feature type="initiator methionine" description="Removed" evidence="2">
    <location>
        <position position="1"/>
    </location>
</feature>
<feature type="chain" id="PRO_0000051568" description="Histone acetyltransferase KAT8">
    <location>
        <begin position="2"/>
        <end position="458"/>
    </location>
</feature>
<feature type="domain" description="Tudor-knot" evidence="3">
    <location>
        <begin position="55"/>
        <end position="110"/>
    </location>
</feature>
<feature type="domain" description="MYST-type HAT" evidence="4">
    <location>
        <begin position="174"/>
        <end position="447"/>
    </location>
</feature>
<feature type="zinc finger region" description="C2HC MYST-type" evidence="4">
    <location>
        <begin position="207"/>
        <end position="232"/>
    </location>
</feature>
<feature type="region of interest" description="Disordered" evidence="5">
    <location>
        <begin position="1"/>
        <end position="52"/>
    </location>
</feature>
<feature type="region of interest" description="Sufficient for interaction with KANSL1" evidence="2">
    <location>
        <begin position="174"/>
        <end position="458"/>
    </location>
</feature>
<feature type="short sequence motif" description="Nuclear localization signal" evidence="2">
    <location>
        <begin position="140"/>
        <end position="149"/>
    </location>
</feature>
<feature type="compositionally biased region" description="Low complexity" evidence="5">
    <location>
        <begin position="1"/>
        <end position="14"/>
    </location>
</feature>
<feature type="active site" description="Proton donor/acceptor" evidence="2">
    <location>
        <position position="350"/>
    </location>
</feature>
<feature type="binding site" evidence="2">
    <location>
        <position position="210"/>
    </location>
    <ligand>
        <name>Zn(2+)</name>
        <dbReference type="ChEBI" id="CHEBI:29105"/>
    </ligand>
</feature>
<feature type="binding site" evidence="2">
    <location>
        <position position="213"/>
    </location>
    <ligand>
        <name>Zn(2+)</name>
        <dbReference type="ChEBI" id="CHEBI:29105"/>
    </ligand>
</feature>
<feature type="binding site" evidence="2">
    <location>
        <position position="226"/>
    </location>
    <ligand>
        <name>Zn(2+)</name>
        <dbReference type="ChEBI" id="CHEBI:29105"/>
    </ligand>
</feature>
<feature type="binding site" evidence="2">
    <location>
        <position position="230"/>
    </location>
    <ligand>
        <name>Zn(2+)</name>
        <dbReference type="ChEBI" id="CHEBI:29105"/>
    </ligand>
</feature>
<feature type="binding site" evidence="2">
    <location>
        <position position="317"/>
    </location>
    <ligand>
        <name>acetyl-CoA</name>
        <dbReference type="ChEBI" id="CHEBI:57288"/>
    </ligand>
</feature>
<feature type="binding site" evidence="2">
    <location>
        <position position="319"/>
    </location>
    <ligand>
        <name>acetyl-CoA</name>
        <dbReference type="ChEBI" id="CHEBI:57288"/>
    </ligand>
</feature>
<feature type="binding site" evidence="2">
    <location>
        <position position="325"/>
    </location>
    <ligand>
        <name>acetyl-CoA</name>
        <dbReference type="ChEBI" id="CHEBI:57288"/>
    </ligand>
</feature>
<feature type="binding site" evidence="2">
    <location>
        <position position="326"/>
    </location>
    <ligand>
        <name>acetyl-CoA</name>
        <dbReference type="ChEBI" id="CHEBI:57288"/>
    </ligand>
</feature>
<feature type="binding site" evidence="2">
    <location>
        <position position="327"/>
    </location>
    <ligand>
        <name>acetyl-CoA</name>
        <dbReference type="ChEBI" id="CHEBI:57288"/>
    </ligand>
</feature>
<feature type="binding site" evidence="2">
    <location>
        <position position="329"/>
    </location>
    <ligand>
        <name>acetyl-CoA</name>
        <dbReference type="ChEBI" id="CHEBI:57288"/>
    </ligand>
</feature>
<feature type="binding site" evidence="2">
    <location>
        <position position="330"/>
    </location>
    <ligand>
        <name>acetyl-CoA</name>
        <dbReference type="ChEBI" id="CHEBI:57288"/>
    </ligand>
</feature>
<feature type="binding site" evidence="2">
    <location>
        <position position="354"/>
    </location>
    <ligand>
        <name>acetyl-CoA</name>
        <dbReference type="ChEBI" id="CHEBI:57288"/>
    </ligand>
</feature>
<feature type="binding site" evidence="2">
    <location>
        <position position="363"/>
    </location>
    <ligand>
        <name>acetyl-CoA</name>
        <dbReference type="ChEBI" id="CHEBI:57288"/>
    </ligand>
</feature>
<feature type="binding site" evidence="2">
    <location>
        <position position="408"/>
    </location>
    <ligand>
        <name>acetyl-CoA</name>
        <dbReference type="ChEBI" id="CHEBI:57288"/>
    </ligand>
</feature>
<feature type="binding site" evidence="2">
    <location>
        <position position="432"/>
    </location>
    <ligand>
        <name>acetyl-CoA</name>
        <dbReference type="ChEBI" id="CHEBI:57288"/>
    </ligand>
</feature>
<feature type="modified residue" description="N-acetylalanine" evidence="2">
    <location>
        <position position="2"/>
    </location>
</feature>
<feature type="modified residue" description="Phosphoserine" evidence="7">
    <location>
        <position position="37"/>
    </location>
</feature>
<feature type="modified residue" description="Phosphoserine" evidence="7">
    <location>
        <position position="42"/>
    </location>
</feature>
<feature type="modified residue" description="N6-acetyllysine" evidence="2">
    <location>
        <position position="113"/>
    </location>
</feature>
<feature type="modified residue" description="N6-acetyllysine; by autocatalysis" evidence="2">
    <location>
        <position position="274"/>
    </location>
</feature>
<feature type="modified residue" description="Phosphoserine" evidence="2">
    <location>
        <position position="348"/>
    </location>
</feature>
<name>KAT8_RAT</name>
<organism>
    <name type="scientific">Rattus norvegicus</name>
    <name type="common">Rat</name>
    <dbReference type="NCBI Taxonomy" id="10116"/>
    <lineage>
        <taxon>Eukaryota</taxon>
        <taxon>Metazoa</taxon>
        <taxon>Chordata</taxon>
        <taxon>Craniata</taxon>
        <taxon>Vertebrata</taxon>
        <taxon>Euteleostomi</taxon>
        <taxon>Mammalia</taxon>
        <taxon>Eutheria</taxon>
        <taxon>Euarchontoglires</taxon>
        <taxon>Glires</taxon>
        <taxon>Rodentia</taxon>
        <taxon>Myomorpha</taxon>
        <taxon>Muroidea</taxon>
        <taxon>Muridae</taxon>
        <taxon>Murinae</taxon>
        <taxon>Rattus</taxon>
    </lineage>
</organism>
<gene>
    <name type="primary">Kat8</name>
    <name type="synonym">Myst1</name>
</gene>